<comment type="function">
    <text evidence="1">Binds to DNA non-specifically. Could be a regulatory factor involved in maltose metabolism.</text>
</comment>
<comment type="similarity">
    <text evidence="1">Belongs to the SfsA family.</text>
</comment>
<reference key="1">
    <citation type="journal article" date="2009" name="PLoS Genet.">
        <title>Organised genome dynamics in the Escherichia coli species results in highly diverse adaptive paths.</title>
        <authorList>
            <person name="Touchon M."/>
            <person name="Hoede C."/>
            <person name="Tenaillon O."/>
            <person name="Barbe V."/>
            <person name="Baeriswyl S."/>
            <person name="Bidet P."/>
            <person name="Bingen E."/>
            <person name="Bonacorsi S."/>
            <person name="Bouchier C."/>
            <person name="Bouvet O."/>
            <person name="Calteau A."/>
            <person name="Chiapello H."/>
            <person name="Clermont O."/>
            <person name="Cruveiller S."/>
            <person name="Danchin A."/>
            <person name="Diard M."/>
            <person name="Dossat C."/>
            <person name="Karoui M.E."/>
            <person name="Frapy E."/>
            <person name="Garry L."/>
            <person name="Ghigo J.M."/>
            <person name="Gilles A.M."/>
            <person name="Johnson J."/>
            <person name="Le Bouguenec C."/>
            <person name="Lescat M."/>
            <person name="Mangenot S."/>
            <person name="Martinez-Jehanne V."/>
            <person name="Matic I."/>
            <person name="Nassif X."/>
            <person name="Oztas S."/>
            <person name="Petit M.A."/>
            <person name="Pichon C."/>
            <person name="Rouy Z."/>
            <person name="Ruf C.S."/>
            <person name="Schneider D."/>
            <person name="Tourret J."/>
            <person name="Vacherie B."/>
            <person name="Vallenet D."/>
            <person name="Medigue C."/>
            <person name="Rocha E.P.C."/>
            <person name="Denamur E."/>
        </authorList>
    </citation>
    <scope>NUCLEOTIDE SEQUENCE [LARGE SCALE GENOMIC DNA]</scope>
    <source>
        <strain>IAI1</strain>
    </source>
</reference>
<feature type="chain" id="PRO_1000117269" description="Sugar fermentation stimulation protein A">
    <location>
        <begin position="1"/>
        <end position="234"/>
    </location>
</feature>
<feature type="DNA-binding region" description="H-T-H motif" evidence="1">
    <location>
        <begin position="201"/>
        <end position="220"/>
    </location>
</feature>
<accession>B7M187</accession>
<dbReference type="EMBL" id="CU928160">
    <property type="protein sequence ID" value="CAQ97033.1"/>
    <property type="molecule type" value="Genomic_DNA"/>
</dbReference>
<dbReference type="RefSeq" id="WP_000396036.1">
    <property type="nucleotide sequence ID" value="NC_011741.1"/>
</dbReference>
<dbReference type="SMR" id="B7M187"/>
<dbReference type="GeneID" id="75202039"/>
<dbReference type="KEGG" id="ecr:ECIAI1_0144"/>
<dbReference type="HOGENOM" id="CLU_052299_2_0_6"/>
<dbReference type="GO" id="GO:0003677">
    <property type="term" value="F:DNA binding"/>
    <property type="evidence" value="ECO:0007669"/>
    <property type="project" value="UniProtKB-KW"/>
</dbReference>
<dbReference type="CDD" id="cd22359">
    <property type="entry name" value="SfsA-like_bacterial"/>
    <property type="match status" value="1"/>
</dbReference>
<dbReference type="FunFam" id="2.40.50.580:FF:000001">
    <property type="entry name" value="Sugar fermentation stimulation protein A"/>
    <property type="match status" value="1"/>
</dbReference>
<dbReference type="FunFam" id="3.40.1350.60:FF:000001">
    <property type="entry name" value="Sugar fermentation stimulation protein A"/>
    <property type="match status" value="1"/>
</dbReference>
<dbReference type="Gene3D" id="2.40.50.580">
    <property type="match status" value="1"/>
</dbReference>
<dbReference type="Gene3D" id="3.40.1350.60">
    <property type="match status" value="1"/>
</dbReference>
<dbReference type="HAMAP" id="MF_00095">
    <property type="entry name" value="SfsA"/>
    <property type="match status" value="1"/>
</dbReference>
<dbReference type="InterPro" id="IPR005224">
    <property type="entry name" value="SfsA"/>
</dbReference>
<dbReference type="InterPro" id="IPR040452">
    <property type="entry name" value="SfsA_C"/>
</dbReference>
<dbReference type="InterPro" id="IPR041465">
    <property type="entry name" value="SfsA_N"/>
</dbReference>
<dbReference type="NCBIfam" id="TIGR00230">
    <property type="entry name" value="sfsA"/>
    <property type="match status" value="1"/>
</dbReference>
<dbReference type="PANTHER" id="PTHR30545">
    <property type="entry name" value="SUGAR FERMENTATION STIMULATION PROTEIN A"/>
    <property type="match status" value="1"/>
</dbReference>
<dbReference type="PANTHER" id="PTHR30545:SF2">
    <property type="entry name" value="SUGAR FERMENTATION STIMULATION PROTEIN A"/>
    <property type="match status" value="1"/>
</dbReference>
<dbReference type="Pfam" id="PF03749">
    <property type="entry name" value="SfsA"/>
    <property type="match status" value="1"/>
</dbReference>
<dbReference type="Pfam" id="PF17746">
    <property type="entry name" value="SfsA_N"/>
    <property type="match status" value="1"/>
</dbReference>
<organism>
    <name type="scientific">Escherichia coli O8 (strain IAI1)</name>
    <dbReference type="NCBI Taxonomy" id="585034"/>
    <lineage>
        <taxon>Bacteria</taxon>
        <taxon>Pseudomonadati</taxon>
        <taxon>Pseudomonadota</taxon>
        <taxon>Gammaproteobacteria</taxon>
        <taxon>Enterobacterales</taxon>
        <taxon>Enterobacteriaceae</taxon>
        <taxon>Escherichia</taxon>
    </lineage>
</organism>
<protein>
    <recommendedName>
        <fullName evidence="1">Sugar fermentation stimulation protein A</fullName>
    </recommendedName>
</protein>
<keyword id="KW-0238">DNA-binding</keyword>
<name>SFSA_ECO8A</name>
<sequence>MEFSPPLQRATLIQRYKRFLADVITPDGRELTLHCPNTGAMTGCATPGDTVWYSTSDNTKRKYPHTWELTQSQSGAFICVNTLWANRLTKEAILNESISELSGYSSLKSEVKYGAERSRIDFMLQADSRPDCYIEVKSVTLAENEQGYFPDAVTERGQKHLRELMSVAAEGQRAVIFFAVLHSAITRFSPARHIDEKYAQLLSEAQQRGVEILAYKAEISAEGMALKKSLPVTL</sequence>
<evidence type="ECO:0000255" key="1">
    <source>
        <dbReference type="HAMAP-Rule" id="MF_00095"/>
    </source>
</evidence>
<proteinExistence type="inferred from homology"/>
<gene>
    <name evidence="1" type="primary">sfsA</name>
    <name type="ordered locus">ECIAI1_0144</name>
</gene>